<proteinExistence type="inferred from homology"/>
<sequence length="280" mass="29956">MNILIALIPALGWGIFSLIAGKIKNSHPANELMGLGTGALIIGIITAIIHPASSNITIFSLSLISGMFCALGQSGQFISMRNIGISKTMPLSTGFQLIGNTLIGAIIFGEWTSSSQYLIGTLALILIIVGVSLTAISKDKSAKLKMRDIILLLFTSIGYWIYSSFPKAITANAQTLFLPQMIGIFIGSIIFLLVSRQTKVLKEKATWLNIFSGFSYGIAAFSYIFSAQLNGVITAFIYSQLCVIISTLGGIFFIGENKTKSELIATFVGLILIIIGAAIQ</sequence>
<comment type="subcellular location">
    <subcellularLocation>
        <location evidence="2">Cell membrane</location>
        <topology evidence="2">Multi-pass membrane protein</topology>
    </subcellularLocation>
</comment>
<comment type="similarity">
    <text evidence="2">Belongs to the GRP transporter (TC 2.A.7.5) family.</text>
</comment>
<feature type="chain" id="PRO_0000213650" description="Putative sugar uptake protein">
    <location>
        <begin position="1"/>
        <end position="280"/>
    </location>
</feature>
<feature type="transmembrane region" description="Helical" evidence="1">
    <location>
        <begin position="4"/>
        <end position="21"/>
    </location>
</feature>
<feature type="transmembrane region" description="Helical" evidence="1">
    <location>
        <begin position="33"/>
        <end position="52"/>
    </location>
</feature>
<feature type="transmembrane region" description="Helical" evidence="1">
    <location>
        <begin position="56"/>
        <end position="78"/>
    </location>
</feature>
<feature type="transmembrane region" description="Helical" evidence="1">
    <location>
        <begin position="91"/>
        <end position="113"/>
    </location>
</feature>
<feature type="transmembrane region" description="Helical" evidence="1">
    <location>
        <begin position="117"/>
        <end position="136"/>
    </location>
</feature>
<feature type="transmembrane region" description="Helical" evidence="1">
    <location>
        <begin position="149"/>
        <end position="166"/>
    </location>
</feature>
<feature type="transmembrane region" description="Helical" evidence="1">
    <location>
        <begin position="176"/>
        <end position="195"/>
    </location>
</feature>
<feature type="transmembrane region" description="Helical" evidence="1">
    <location>
        <begin position="207"/>
        <end position="229"/>
    </location>
</feature>
<feature type="transmembrane region" description="Helical" evidence="1">
    <location>
        <begin position="233"/>
        <end position="255"/>
    </location>
</feature>
<feature type="transmembrane region" description="Helical" evidence="1">
    <location>
        <begin position="262"/>
        <end position="279"/>
    </location>
</feature>
<organism>
    <name type="scientific">Lactobacillus helveticus</name>
    <name type="common">Lactobacillus suntoryeus</name>
    <dbReference type="NCBI Taxonomy" id="1587"/>
    <lineage>
        <taxon>Bacteria</taxon>
        <taxon>Bacillati</taxon>
        <taxon>Bacillota</taxon>
        <taxon>Bacilli</taxon>
        <taxon>Lactobacillales</taxon>
        <taxon>Lactobacillaceae</taxon>
        <taxon>Lactobacillus</taxon>
    </lineage>
</organism>
<reference key="1">
    <citation type="submission" date="1997-11" db="EMBL/GenBank/DDBJ databases">
        <title>Genetic characterization of a transmembrane protein gene cotranscribed with the peptidase C (pepC) gene from Lactobacillus helveticus.</title>
        <authorList>
            <person name="Vesanto E."/>
            <person name="Palva A."/>
        </authorList>
    </citation>
    <scope>NUCLEOTIDE SEQUENCE [GENOMIC DNA]</scope>
    <source>
        <strain>53/7</strain>
    </source>
</reference>
<name>YSUP_LACHE</name>
<evidence type="ECO:0000255" key="1"/>
<evidence type="ECO:0000305" key="2"/>
<keyword id="KW-1003">Cell membrane</keyword>
<keyword id="KW-0472">Membrane</keyword>
<keyword id="KW-0762">Sugar transport</keyword>
<keyword id="KW-0812">Transmembrane</keyword>
<keyword id="KW-1133">Transmembrane helix</keyword>
<keyword id="KW-0813">Transport</keyword>
<protein>
    <recommendedName>
        <fullName>Putative sugar uptake protein</fullName>
    </recommendedName>
</protein>
<accession>Q9ZF37</accession>
<dbReference type="EMBL" id="AJ002481">
    <property type="protein sequence ID" value="CAA05490.1"/>
    <property type="molecule type" value="Genomic_DNA"/>
</dbReference>
<dbReference type="RefSeq" id="WP_012211401.1">
    <property type="nucleotide sequence ID" value="NZ_WCHF01000082.1"/>
</dbReference>
<dbReference type="SMR" id="Q9ZF37"/>
<dbReference type="eggNOG" id="COG4975">
    <property type="taxonomic scope" value="Bacteria"/>
</dbReference>
<dbReference type="OMA" id="KATWLNI"/>
<dbReference type="GO" id="GO:0005886">
    <property type="term" value="C:plasma membrane"/>
    <property type="evidence" value="ECO:0007669"/>
    <property type="project" value="UniProtKB-SubCell"/>
</dbReference>
<dbReference type="GO" id="GO:0015144">
    <property type="term" value="F:carbohydrate transmembrane transporter activity"/>
    <property type="evidence" value="ECO:0007669"/>
    <property type="project" value="InterPro"/>
</dbReference>
<dbReference type="CDD" id="cd23110">
    <property type="entry name" value="GRP"/>
    <property type="match status" value="1"/>
</dbReference>
<dbReference type="InterPro" id="IPR010651">
    <property type="entry name" value="Sugar_transport"/>
</dbReference>
<dbReference type="NCBIfam" id="TIGR00776">
    <property type="entry name" value="RhaT"/>
    <property type="match status" value="1"/>
</dbReference>
<dbReference type="PANTHER" id="PTHR16119">
    <property type="entry name" value="TRANSMEMBRANE PROTEIN 144"/>
    <property type="match status" value="1"/>
</dbReference>
<dbReference type="PANTHER" id="PTHR16119:SF17">
    <property type="entry name" value="TRANSMEMBRANE PROTEIN 144"/>
    <property type="match status" value="1"/>
</dbReference>
<dbReference type="Pfam" id="PF06800">
    <property type="entry name" value="Sugar_transport"/>
    <property type="match status" value="1"/>
</dbReference>
<dbReference type="SUPFAM" id="SSF103481">
    <property type="entry name" value="Multidrug resistance efflux transporter EmrE"/>
    <property type="match status" value="1"/>
</dbReference>